<proteinExistence type="evidence at protein level"/>
<comment type="function">
    <text evidence="3 4 5">Member of the two-component regulatory system BceS/BceR involved in the regulation of bacitracin resistance. Activates BceR in response to extracellular bacitracin.</text>
</comment>
<comment type="catalytic activity">
    <reaction>
        <text>ATP + protein L-histidine = ADP + protein N-phospho-L-histidine.</text>
        <dbReference type="EC" id="2.7.13.3"/>
    </reaction>
</comment>
<comment type="subcellular location">
    <subcellularLocation>
        <location evidence="6">Cell membrane</location>
        <topology evidence="6">Multi-pass membrane protein</topology>
    </subcellularLocation>
</comment>
<sequence length="334" mass="38765">MIKAFLIERRSWIAAFLFQQALMLFIAFVDPSISFGNVLYMVYLCILFFIIFLWFRYRKETAFYKSLKTWENNLDVTAINEPETPFEAMVERSIAGQTEHLKQTAARHRLALENEKDELMAWIHEVKTPLTAMHLIIDRMEEKALKSQLSYEWLRIHLLLDQQLHQKRISFIENDLSVEFIQLQPLIFKEIKDLQSWCIQKGIGFDIQLEAKEVLSDAKWLAFIIRQLLTNAVKYSEASEIEIKSFQKGEQTQLQVKDCGRGIDPKDVPRIFDKGFTSTTDHHDQASTGMGLYLAKKAAAPLLIHIDVESEFGAGTVFTLTFPIRNQFEHVISV</sequence>
<organism>
    <name type="scientific">Bacillus subtilis (strain 168)</name>
    <dbReference type="NCBI Taxonomy" id="224308"/>
    <lineage>
        <taxon>Bacteria</taxon>
        <taxon>Bacillati</taxon>
        <taxon>Bacillota</taxon>
        <taxon>Bacilli</taxon>
        <taxon>Bacillales</taxon>
        <taxon>Bacillaceae</taxon>
        <taxon>Bacillus</taxon>
    </lineage>
</organism>
<reference key="1">
    <citation type="journal article" date="1997" name="Microbiology">
        <title>Sequencing and functional annotation of the Bacillus subtilis genes in the 200 kb rrnB-dnaB region.</title>
        <authorList>
            <person name="Lapidus A."/>
            <person name="Galleron N."/>
            <person name="Sorokin A."/>
            <person name="Ehrlich S.D."/>
        </authorList>
    </citation>
    <scope>NUCLEOTIDE SEQUENCE [GENOMIC DNA]</scope>
    <source>
        <strain>168</strain>
    </source>
</reference>
<reference key="2">
    <citation type="journal article" date="1997" name="Nature">
        <title>The complete genome sequence of the Gram-positive bacterium Bacillus subtilis.</title>
        <authorList>
            <person name="Kunst F."/>
            <person name="Ogasawara N."/>
            <person name="Moszer I."/>
            <person name="Albertini A.M."/>
            <person name="Alloni G."/>
            <person name="Azevedo V."/>
            <person name="Bertero M.G."/>
            <person name="Bessieres P."/>
            <person name="Bolotin A."/>
            <person name="Borchert S."/>
            <person name="Borriss R."/>
            <person name="Boursier L."/>
            <person name="Brans A."/>
            <person name="Braun M."/>
            <person name="Brignell S.C."/>
            <person name="Bron S."/>
            <person name="Brouillet S."/>
            <person name="Bruschi C.V."/>
            <person name="Caldwell B."/>
            <person name="Capuano V."/>
            <person name="Carter N.M."/>
            <person name="Choi S.-K."/>
            <person name="Codani J.-J."/>
            <person name="Connerton I.F."/>
            <person name="Cummings N.J."/>
            <person name="Daniel R.A."/>
            <person name="Denizot F."/>
            <person name="Devine K.M."/>
            <person name="Duesterhoeft A."/>
            <person name="Ehrlich S.D."/>
            <person name="Emmerson P.T."/>
            <person name="Entian K.-D."/>
            <person name="Errington J."/>
            <person name="Fabret C."/>
            <person name="Ferrari E."/>
            <person name="Foulger D."/>
            <person name="Fritz C."/>
            <person name="Fujita M."/>
            <person name="Fujita Y."/>
            <person name="Fuma S."/>
            <person name="Galizzi A."/>
            <person name="Galleron N."/>
            <person name="Ghim S.-Y."/>
            <person name="Glaser P."/>
            <person name="Goffeau A."/>
            <person name="Golightly E.J."/>
            <person name="Grandi G."/>
            <person name="Guiseppi G."/>
            <person name="Guy B.J."/>
            <person name="Haga K."/>
            <person name="Haiech J."/>
            <person name="Harwood C.R."/>
            <person name="Henaut A."/>
            <person name="Hilbert H."/>
            <person name="Holsappel S."/>
            <person name="Hosono S."/>
            <person name="Hullo M.-F."/>
            <person name="Itaya M."/>
            <person name="Jones L.-M."/>
            <person name="Joris B."/>
            <person name="Karamata D."/>
            <person name="Kasahara Y."/>
            <person name="Klaerr-Blanchard M."/>
            <person name="Klein C."/>
            <person name="Kobayashi Y."/>
            <person name="Koetter P."/>
            <person name="Koningstein G."/>
            <person name="Krogh S."/>
            <person name="Kumano M."/>
            <person name="Kurita K."/>
            <person name="Lapidus A."/>
            <person name="Lardinois S."/>
            <person name="Lauber J."/>
            <person name="Lazarevic V."/>
            <person name="Lee S.-M."/>
            <person name="Levine A."/>
            <person name="Liu H."/>
            <person name="Masuda S."/>
            <person name="Mauel C."/>
            <person name="Medigue C."/>
            <person name="Medina N."/>
            <person name="Mellado R.P."/>
            <person name="Mizuno M."/>
            <person name="Moestl D."/>
            <person name="Nakai S."/>
            <person name="Noback M."/>
            <person name="Noone D."/>
            <person name="O'Reilly M."/>
            <person name="Ogawa K."/>
            <person name="Ogiwara A."/>
            <person name="Oudega B."/>
            <person name="Park S.-H."/>
            <person name="Parro V."/>
            <person name="Pohl T.M."/>
            <person name="Portetelle D."/>
            <person name="Porwollik S."/>
            <person name="Prescott A.M."/>
            <person name="Presecan E."/>
            <person name="Pujic P."/>
            <person name="Purnelle B."/>
            <person name="Rapoport G."/>
            <person name="Rey M."/>
            <person name="Reynolds S."/>
            <person name="Rieger M."/>
            <person name="Rivolta C."/>
            <person name="Rocha E."/>
            <person name="Roche B."/>
            <person name="Rose M."/>
            <person name="Sadaie Y."/>
            <person name="Sato T."/>
            <person name="Scanlan E."/>
            <person name="Schleich S."/>
            <person name="Schroeter R."/>
            <person name="Scoffone F."/>
            <person name="Sekiguchi J."/>
            <person name="Sekowska A."/>
            <person name="Seror S.J."/>
            <person name="Serror P."/>
            <person name="Shin B.-S."/>
            <person name="Soldo B."/>
            <person name="Sorokin A."/>
            <person name="Tacconi E."/>
            <person name="Takagi T."/>
            <person name="Takahashi H."/>
            <person name="Takemaru K."/>
            <person name="Takeuchi M."/>
            <person name="Tamakoshi A."/>
            <person name="Tanaka T."/>
            <person name="Terpstra P."/>
            <person name="Tognoni A."/>
            <person name="Tosato V."/>
            <person name="Uchiyama S."/>
            <person name="Vandenbol M."/>
            <person name="Vannier F."/>
            <person name="Vassarotti A."/>
            <person name="Viari A."/>
            <person name="Wambutt R."/>
            <person name="Wedler E."/>
            <person name="Wedler H."/>
            <person name="Weitzenegger T."/>
            <person name="Winters P."/>
            <person name="Wipat A."/>
            <person name="Yamamoto H."/>
            <person name="Yamane K."/>
            <person name="Yasumoto K."/>
            <person name="Yata K."/>
            <person name="Yoshida K."/>
            <person name="Yoshikawa H.-F."/>
            <person name="Zumstein E."/>
            <person name="Yoshikawa H."/>
            <person name="Danchin A."/>
        </authorList>
    </citation>
    <scope>NUCLEOTIDE SEQUENCE [LARGE SCALE GENOMIC DNA]</scope>
    <source>
        <strain>168</strain>
    </source>
</reference>
<reference key="3">
    <citation type="journal article" date="2001" name="J. Bacteriol.">
        <title>Comprehensive DNA microarray analysis of Bacillus subtilis two-component regulatory systems.</title>
        <authorList>
            <person name="Kobayashi K."/>
            <person name="Ogura M."/>
            <person name="Yamaguchi H."/>
            <person name="Yoshida K."/>
            <person name="Ogasawara N."/>
            <person name="Tanaka T."/>
            <person name="Fujita Y."/>
        </authorList>
    </citation>
    <scope>FUNCTION</scope>
</reference>
<reference key="4">
    <citation type="journal article" date="2003" name="FEMS Microbiol. Lett.">
        <title>YtsCD and YwoA, two independent systems that confer bacitracin resistance to Bacillus subtilis.</title>
        <authorList>
            <person name="Bernard R."/>
            <person name="Joseph P."/>
            <person name="Guiseppi A."/>
            <person name="Chippaux M."/>
            <person name="Denizot F."/>
        </authorList>
    </citation>
    <scope>FUNCTION</scope>
    <source>
        <strain>168</strain>
    </source>
</reference>
<reference key="5">
    <citation type="journal article" date="2003" name="Mol. Microbiol.">
        <title>The BceRS two-component regulatory system induces expression of the bacitracin transporter, BceAB, in Bacillus subtilis.</title>
        <authorList>
            <person name="Ohki R."/>
            <person name="Giyanto X."/>
            <person name="Tateno K."/>
            <person name="Masuyama W."/>
            <person name="Moriya S."/>
            <person name="Kobayashi K."/>
            <person name="Ogasawara N."/>
        </authorList>
    </citation>
    <scope>FUNCTION</scope>
    <source>
        <strain>168</strain>
    </source>
</reference>
<feature type="chain" id="PRO_0000074709" description="Sensor protein BceS">
    <location>
        <begin position="1"/>
        <end position="334"/>
    </location>
</feature>
<feature type="topological domain" description="Cytoplasmic" evidence="1">
    <location>
        <begin position="1"/>
        <end position="12"/>
    </location>
</feature>
<feature type="transmembrane region" description="Helical" evidence="1">
    <location>
        <begin position="13"/>
        <end position="33"/>
    </location>
</feature>
<feature type="topological domain" description="Extracellular" evidence="1">
    <location>
        <position position="34"/>
    </location>
</feature>
<feature type="transmembrane region" description="Helical" evidence="1">
    <location>
        <begin position="35"/>
        <end position="55"/>
    </location>
</feature>
<feature type="topological domain" description="Cytoplasmic" evidence="1">
    <location>
        <begin position="56"/>
        <end position="334"/>
    </location>
</feature>
<feature type="domain" description="Histidine kinase" evidence="2">
    <location>
        <begin position="121"/>
        <end position="326"/>
    </location>
</feature>
<feature type="modified residue" description="Phosphohistidine; by autocatalysis" evidence="2">
    <location>
        <position position="124"/>
    </location>
</feature>
<feature type="helix" evidence="8">
    <location>
        <begin position="2"/>
        <end position="8"/>
    </location>
</feature>
<feature type="helix" evidence="8">
    <location>
        <begin position="10"/>
        <end position="29"/>
    </location>
</feature>
<feature type="strand" evidence="7">
    <location>
        <begin position="31"/>
        <end position="33"/>
    </location>
</feature>
<feature type="helix" evidence="8">
    <location>
        <begin position="37"/>
        <end position="60"/>
    </location>
</feature>
<feature type="helix" evidence="8">
    <location>
        <begin position="63"/>
        <end position="71"/>
    </location>
</feature>
<feature type="strand" evidence="8">
    <location>
        <begin position="72"/>
        <end position="74"/>
    </location>
</feature>
<feature type="helix" evidence="7">
    <location>
        <begin position="76"/>
        <end position="78"/>
    </location>
</feature>
<feature type="helix" evidence="8">
    <location>
        <begin position="85"/>
        <end position="137"/>
    </location>
</feature>
<feature type="helix" evidence="8">
    <location>
        <begin position="144"/>
        <end position="168"/>
    </location>
</feature>
<feature type="turn" evidence="8">
    <location>
        <begin position="169"/>
        <end position="175"/>
    </location>
</feature>
<feature type="strand" evidence="8">
    <location>
        <begin position="179"/>
        <end position="182"/>
    </location>
</feature>
<feature type="helix" evidence="8">
    <location>
        <begin position="183"/>
        <end position="193"/>
    </location>
</feature>
<feature type="helix" evidence="8">
    <location>
        <begin position="195"/>
        <end position="201"/>
    </location>
</feature>
<feature type="strand" evidence="8">
    <location>
        <begin position="205"/>
        <end position="210"/>
    </location>
</feature>
<feature type="strand" evidence="8">
    <location>
        <begin position="213"/>
        <end position="216"/>
    </location>
</feature>
<feature type="helix" evidence="8">
    <location>
        <begin position="218"/>
        <end position="234"/>
    </location>
</feature>
<feature type="strand" evidence="8">
    <location>
        <begin position="241"/>
        <end position="248"/>
    </location>
</feature>
<feature type="strand" evidence="8">
    <location>
        <begin position="251"/>
        <end position="257"/>
    </location>
</feature>
<feature type="turn" evidence="8">
    <location>
        <begin position="265"/>
        <end position="267"/>
    </location>
</feature>
<feature type="helix" evidence="8">
    <location>
        <begin position="269"/>
        <end position="272"/>
    </location>
</feature>
<feature type="helix" evidence="8">
    <location>
        <begin position="282"/>
        <end position="284"/>
    </location>
</feature>
<feature type="strand" evidence="8">
    <location>
        <begin position="285"/>
        <end position="287"/>
    </location>
</feature>
<feature type="helix" evidence="8">
    <location>
        <begin position="291"/>
        <end position="299"/>
    </location>
</feature>
<feature type="turn" evidence="8">
    <location>
        <begin position="300"/>
        <end position="303"/>
    </location>
</feature>
<feature type="strand" evidence="8">
    <location>
        <begin position="305"/>
        <end position="311"/>
    </location>
</feature>
<feature type="turn" evidence="8">
    <location>
        <begin position="312"/>
        <end position="314"/>
    </location>
</feature>
<feature type="strand" evidence="8">
    <location>
        <begin position="315"/>
        <end position="322"/>
    </location>
</feature>
<feature type="helix" evidence="8">
    <location>
        <begin position="325"/>
        <end position="327"/>
    </location>
</feature>
<feature type="helix" evidence="8">
    <location>
        <begin position="328"/>
        <end position="333"/>
    </location>
</feature>
<dbReference type="EC" id="2.7.13.3"/>
<dbReference type="EMBL" id="AF008220">
    <property type="protein sequence ID" value="AAC00254.1"/>
    <property type="molecule type" value="Genomic_DNA"/>
</dbReference>
<dbReference type="EMBL" id="AL009126">
    <property type="protein sequence ID" value="CAB15017.1"/>
    <property type="molecule type" value="Genomic_DNA"/>
</dbReference>
<dbReference type="PIR" id="H70000">
    <property type="entry name" value="H70000"/>
</dbReference>
<dbReference type="RefSeq" id="NP_390917.1">
    <property type="nucleotide sequence ID" value="NC_000964.3"/>
</dbReference>
<dbReference type="RefSeq" id="WP_004398652.1">
    <property type="nucleotide sequence ID" value="NZ_OZ025638.1"/>
</dbReference>
<dbReference type="PDB" id="8G3A">
    <property type="method" value="EM"/>
    <property type="resolution" value="3.40 A"/>
    <property type="chains" value="D/E=1-334"/>
</dbReference>
<dbReference type="PDB" id="8G3B">
    <property type="method" value="EM"/>
    <property type="resolution" value="3.50 A"/>
    <property type="chains" value="D/E=1-334"/>
</dbReference>
<dbReference type="PDB" id="8G3F">
    <property type="method" value="EM"/>
    <property type="resolution" value="3.70 A"/>
    <property type="chains" value="D/E=1-334"/>
</dbReference>
<dbReference type="PDB" id="8G3L">
    <property type="method" value="EM"/>
    <property type="resolution" value="3.50 A"/>
    <property type="chains" value="D/E=1-334"/>
</dbReference>
<dbReference type="PDB" id="8G4C">
    <property type="method" value="EM"/>
    <property type="resolution" value="3.10 A"/>
    <property type="chains" value="D/E=1-334"/>
</dbReference>
<dbReference type="PDB" id="8G4D">
    <property type="method" value="EM"/>
    <property type="resolution" value="3.60 A"/>
    <property type="chains" value="D/E=1-334"/>
</dbReference>
<dbReference type="PDBsum" id="8G3A"/>
<dbReference type="PDBsum" id="8G3B"/>
<dbReference type="PDBsum" id="8G3F"/>
<dbReference type="PDBsum" id="8G3L"/>
<dbReference type="PDBsum" id="8G4C"/>
<dbReference type="PDBsum" id="8G4D"/>
<dbReference type="EMDB" id="EMD-29690"/>
<dbReference type="EMDB" id="EMD-29691"/>
<dbReference type="EMDB" id="EMD-29694"/>
<dbReference type="EMDB" id="EMD-29701"/>
<dbReference type="EMDB" id="EMD-29716"/>
<dbReference type="EMDB" id="EMD-29717"/>
<dbReference type="SMR" id="O35044"/>
<dbReference type="FunCoup" id="O35044">
    <property type="interactions" value="157"/>
</dbReference>
<dbReference type="STRING" id="224308.BSU30390"/>
<dbReference type="PaxDb" id="224308-BSU30390"/>
<dbReference type="EnsemblBacteria" id="CAB15017">
    <property type="protein sequence ID" value="CAB15017"/>
    <property type="gene ID" value="BSU_30390"/>
</dbReference>
<dbReference type="GeneID" id="936816"/>
<dbReference type="KEGG" id="bsu:BSU30390"/>
<dbReference type="PATRIC" id="fig|224308.179.peg.3296"/>
<dbReference type="eggNOG" id="COG2205">
    <property type="taxonomic scope" value="Bacteria"/>
</dbReference>
<dbReference type="InParanoid" id="O35044"/>
<dbReference type="OrthoDB" id="9780487at2"/>
<dbReference type="PhylomeDB" id="O35044"/>
<dbReference type="BioCyc" id="BSUB:BSU30390-MONOMER"/>
<dbReference type="Proteomes" id="UP000001570">
    <property type="component" value="Chromosome"/>
</dbReference>
<dbReference type="GO" id="GO:0005886">
    <property type="term" value="C:plasma membrane"/>
    <property type="evidence" value="ECO:0007669"/>
    <property type="project" value="UniProtKB-SubCell"/>
</dbReference>
<dbReference type="GO" id="GO:0005524">
    <property type="term" value="F:ATP binding"/>
    <property type="evidence" value="ECO:0007669"/>
    <property type="project" value="UniProtKB-KW"/>
</dbReference>
<dbReference type="GO" id="GO:0004673">
    <property type="term" value="F:protein histidine kinase activity"/>
    <property type="evidence" value="ECO:0007669"/>
    <property type="project" value="UniProtKB-EC"/>
</dbReference>
<dbReference type="GO" id="GO:0000160">
    <property type="term" value="P:phosphorelay signal transduction system"/>
    <property type="evidence" value="ECO:0007669"/>
    <property type="project" value="UniProtKB-KW"/>
</dbReference>
<dbReference type="CDD" id="cd16948">
    <property type="entry name" value="HATPase_BceS-YxdK-YvcQ-like"/>
    <property type="match status" value="1"/>
</dbReference>
<dbReference type="Gene3D" id="3.30.565.10">
    <property type="entry name" value="Histidine kinase-like ATPase, C-terminal domain"/>
    <property type="match status" value="1"/>
</dbReference>
<dbReference type="InterPro" id="IPR050351">
    <property type="entry name" value="2-comp_sensor_kinase"/>
</dbReference>
<dbReference type="InterPro" id="IPR036890">
    <property type="entry name" value="HATPase_C_sf"/>
</dbReference>
<dbReference type="InterPro" id="IPR005467">
    <property type="entry name" value="His_kinase_dom"/>
</dbReference>
<dbReference type="InterPro" id="IPR004358">
    <property type="entry name" value="Sig_transdc_His_kin-like_C"/>
</dbReference>
<dbReference type="PANTHER" id="PTHR45453:SF2">
    <property type="entry name" value="HISTIDINE KINASE"/>
    <property type="match status" value="1"/>
</dbReference>
<dbReference type="PANTHER" id="PTHR45453">
    <property type="entry name" value="PHOSPHATE REGULON SENSOR PROTEIN PHOR"/>
    <property type="match status" value="1"/>
</dbReference>
<dbReference type="Pfam" id="PF02518">
    <property type="entry name" value="HATPase_c"/>
    <property type="match status" value="1"/>
</dbReference>
<dbReference type="PRINTS" id="PR00344">
    <property type="entry name" value="BCTRLSENSOR"/>
</dbReference>
<dbReference type="SMART" id="SM00387">
    <property type="entry name" value="HATPase_c"/>
    <property type="match status" value="1"/>
</dbReference>
<dbReference type="SUPFAM" id="SSF55874">
    <property type="entry name" value="ATPase domain of HSP90 chaperone/DNA topoisomerase II/histidine kinase"/>
    <property type="match status" value="1"/>
</dbReference>
<dbReference type="PROSITE" id="PS50109">
    <property type="entry name" value="HIS_KIN"/>
    <property type="match status" value="1"/>
</dbReference>
<name>BCES_BACSU</name>
<accession>O35044</accession>
<gene>
    <name type="primary">bceS</name>
    <name type="synonym">barB</name>
    <name type="synonym">ytsB</name>
    <name type="ordered locus">BSU30390</name>
</gene>
<protein>
    <recommendedName>
        <fullName>Sensor protein BceS</fullName>
        <ecNumber>2.7.13.3</ecNumber>
    </recommendedName>
</protein>
<keyword id="KW-0002">3D-structure</keyword>
<keyword id="KW-0067">ATP-binding</keyword>
<keyword id="KW-1003">Cell membrane</keyword>
<keyword id="KW-0418">Kinase</keyword>
<keyword id="KW-0472">Membrane</keyword>
<keyword id="KW-0547">Nucleotide-binding</keyword>
<keyword id="KW-0597">Phosphoprotein</keyword>
<keyword id="KW-1185">Reference proteome</keyword>
<keyword id="KW-0808">Transferase</keyword>
<keyword id="KW-0812">Transmembrane</keyword>
<keyword id="KW-1133">Transmembrane helix</keyword>
<keyword id="KW-0902">Two-component regulatory system</keyword>
<evidence type="ECO:0000255" key="1"/>
<evidence type="ECO:0000255" key="2">
    <source>
        <dbReference type="PROSITE-ProRule" id="PRU00107"/>
    </source>
</evidence>
<evidence type="ECO:0000269" key="3">
    <source>
    </source>
</evidence>
<evidence type="ECO:0000269" key="4">
    <source>
    </source>
</evidence>
<evidence type="ECO:0000269" key="5">
    <source>
    </source>
</evidence>
<evidence type="ECO:0000305" key="6"/>
<evidence type="ECO:0007829" key="7">
    <source>
        <dbReference type="PDB" id="8G3A"/>
    </source>
</evidence>
<evidence type="ECO:0007829" key="8">
    <source>
        <dbReference type="PDB" id="8G4C"/>
    </source>
</evidence>